<organism>
    <name type="scientific">Mus musculus</name>
    <name type="common">Mouse</name>
    <dbReference type="NCBI Taxonomy" id="10090"/>
    <lineage>
        <taxon>Eukaryota</taxon>
        <taxon>Metazoa</taxon>
        <taxon>Chordata</taxon>
        <taxon>Craniata</taxon>
        <taxon>Vertebrata</taxon>
        <taxon>Euteleostomi</taxon>
        <taxon>Mammalia</taxon>
        <taxon>Eutheria</taxon>
        <taxon>Euarchontoglires</taxon>
        <taxon>Glires</taxon>
        <taxon>Rodentia</taxon>
        <taxon>Myomorpha</taxon>
        <taxon>Muroidea</taxon>
        <taxon>Muridae</taxon>
        <taxon>Murinae</taxon>
        <taxon>Mus</taxon>
        <taxon>Mus</taxon>
    </lineage>
</organism>
<name>CYC2_MOUSE</name>
<keyword id="KW-0002">3D-structure</keyword>
<keyword id="KW-0007">Acetylation</keyword>
<keyword id="KW-0053">Apoptosis</keyword>
<keyword id="KW-0903">Direct protein sequencing</keyword>
<keyword id="KW-0249">Electron transport</keyword>
<keyword id="KW-0349">Heme</keyword>
<keyword id="KW-0408">Iron</keyword>
<keyword id="KW-0479">Metal-binding</keyword>
<keyword id="KW-0496">Mitochondrion</keyword>
<keyword id="KW-0597">Phosphoprotein</keyword>
<keyword id="KW-1185">Reference proteome</keyword>
<keyword id="KW-0679">Respiratory chain</keyword>
<keyword id="KW-0813">Transport</keyword>
<proteinExistence type="evidence at protein level"/>
<feature type="initiator methionine" description="Removed" evidence="3">
    <location>
        <position position="1"/>
    </location>
</feature>
<feature type="chain" id="PRO_0000108226" description="Cytochrome c, testis-specific">
    <location>
        <begin position="2"/>
        <end position="105"/>
    </location>
</feature>
<feature type="binding site" description="covalent" evidence="2 3">
    <location>
        <position position="15"/>
    </location>
    <ligand>
        <name>heme c</name>
        <dbReference type="ChEBI" id="CHEBI:61717"/>
    </ligand>
</feature>
<feature type="binding site" description="covalent" evidence="2 3">
    <location>
        <position position="18"/>
    </location>
    <ligand>
        <name>heme c</name>
        <dbReference type="ChEBI" id="CHEBI:61717"/>
    </ligand>
</feature>
<feature type="binding site" description="axial binding residue">
    <location>
        <position position="19"/>
    </location>
    <ligand>
        <name>heme c</name>
        <dbReference type="ChEBI" id="CHEBI:61717"/>
    </ligand>
    <ligandPart>
        <name>Fe</name>
        <dbReference type="ChEBI" id="CHEBI:18248"/>
    </ligandPart>
</feature>
<feature type="binding site" description="axial binding residue">
    <location>
        <position position="81"/>
    </location>
    <ligand>
        <name>heme c</name>
        <dbReference type="ChEBI" id="CHEBI:61717"/>
    </ligand>
    <ligandPart>
        <name>Fe</name>
        <dbReference type="ChEBI" id="CHEBI:18248"/>
    </ligandPart>
</feature>
<feature type="modified residue" description="N-acetylglycine" evidence="3">
    <location>
        <position position="2"/>
    </location>
</feature>
<feature type="helix" evidence="5">
    <location>
        <begin position="4"/>
        <end position="14"/>
    </location>
</feature>
<feature type="turn" evidence="5">
    <location>
        <begin position="15"/>
        <end position="18"/>
    </location>
</feature>
<feature type="strand" evidence="5">
    <location>
        <begin position="39"/>
        <end position="42"/>
    </location>
</feature>
<feature type="helix" evidence="5">
    <location>
        <begin position="51"/>
        <end position="55"/>
    </location>
</feature>
<feature type="helix" evidence="5">
    <location>
        <begin position="62"/>
        <end position="70"/>
    </location>
</feature>
<feature type="helix" evidence="5">
    <location>
        <begin position="72"/>
        <end position="75"/>
    </location>
</feature>
<feature type="helix" evidence="5">
    <location>
        <begin position="89"/>
        <end position="104"/>
    </location>
</feature>
<evidence type="ECO:0000250" key="1"/>
<evidence type="ECO:0000255" key="2">
    <source>
        <dbReference type="PROSITE-ProRule" id="PRU00433"/>
    </source>
</evidence>
<evidence type="ECO:0000269" key="3">
    <source>
    </source>
</evidence>
<evidence type="ECO:0000305" key="4"/>
<evidence type="ECO:0007829" key="5">
    <source>
        <dbReference type="PDB" id="2AIU"/>
    </source>
</evidence>
<dbReference type="EMBL" id="M20625">
    <property type="protein sequence ID" value="AAA37501.1"/>
    <property type="molecule type" value="mRNA"/>
</dbReference>
<dbReference type="EMBL" id="X55771">
    <property type="protein sequence ID" value="CAA39293.1"/>
    <property type="molecule type" value="mRNA"/>
</dbReference>
<dbReference type="EMBL" id="AK005582">
    <property type="protein sequence ID" value="BAB24136.1"/>
    <property type="molecule type" value="mRNA"/>
</dbReference>
<dbReference type="EMBL" id="AK018833">
    <property type="protein sequence ID" value="BAB31455.1"/>
    <property type="molecule type" value="mRNA"/>
</dbReference>
<dbReference type="EMBL" id="AK018851">
    <property type="protein sequence ID" value="BAB31464.1"/>
    <property type="molecule type" value="mRNA"/>
</dbReference>
<dbReference type="CCDS" id="CCDS16156.1"/>
<dbReference type="PIR" id="B28160">
    <property type="entry name" value="CCMST"/>
</dbReference>
<dbReference type="RefSeq" id="NP_034119.1">
    <property type="nucleotide sequence ID" value="NM_009989.3"/>
</dbReference>
<dbReference type="RefSeq" id="XP_011237575.1">
    <property type="nucleotide sequence ID" value="XM_011239273.1"/>
</dbReference>
<dbReference type="PDB" id="2AIU">
    <property type="method" value="X-ray"/>
    <property type="resolution" value="1.60 A"/>
    <property type="chains" value="A=1-105"/>
</dbReference>
<dbReference type="PDBsum" id="2AIU"/>
<dbReference type="SMR" id="P00015"/>
<dbReference type="BioGRID" id="198996">
    <property type="interactions" value="17"/>
</dbReference>
<dbReference type="FunCoup" id="P00015">
    <property type="interactions" value="786"/>
</dbReference>
<dbReference type="STRING" id="10090.ENSMUSP00000028430"/>
<dbReference type="iPTMnet" id="P00015"/>
<dbReference type="PhosphoSitePlus" id="P00015"/>
<dbReference type="SwissPalm" id="P00015"/>
<dbReference type="jPOST" id="P00015"/>
<dbReference type="PaxDb" id="10090-ENSMUSP00000028430"/>
<dbReference type="PeptideAtlas" id="P00015"/>
<dbReference type="ProteomicsDB" id="279229"/>
<dbReference type="DNASU" id="13067"/>
<dbReference type="Ensembl" id="ENSMUST00000028430.6">
    <property type="protein sequence ID" value="ENSMUSP00000028430.5"/>
    <property type="gene ID" value="ENSMUSG00000056436.5"/>
</dbReference>
<dbReference type="GeneID" id="13067"/>
<dbReference type="KEGG" id="mmu:13067"/>
<dbReference type="UCSC" id="uc008key.2">
    <property type="organism name" value="mouse"/>
</dbReference>
<dbReference type="AGR" id="MGI:88579"/>
<dbReference type="CTD" id="13067"/>
<dbReference type="MGI" id="MGI:88579">
    <property type="gene designation" value="Cyct"/>
</dbReference>
<dbReference type="VEuPathDB" id="HostDB:ENSMUSG00000056436"/>
<dbReference type="eggNOG" id="KOG3453">
    <property type="taxonomic scope" value="Eukaryota"/>
</dbReference>
<dbReference type="GeneTree" id="ENSGT00940000157883"/>
<dbReference type="HOGENOM" id="CLU_060944_3_0_1"/>
<dbReference type="InParanoid" id="P00015"/>
<dbReference type="OMA" id="RNCNEIW"/>
<dbReference type="OrthoDB" id="449280at2759"/>
<dbReference type="PhylomeDB" id="P00015"/>
<dbReference type="TreeFam" id="TF300226"/>
<dbReference type="BioGRID-ORCS" id="13067">
    <property type="hits" value="2 hits in 77 CRISPR screens"/>
</dbReference>
<dbReference type="ChiTaRS" id="Cyct">
    <property type="organism name" value="mouse"/>
</dbReference>
<dbReference type="EvolutionaryTrace" id="P00015"/>
<dbReference type="PRO" id="PR:P00015"/>
<dbReference type="Proteomes" id="UP000000589">
    <property type="component" value="Chromosome 2"/>
</dbReference>
<dbReference type="RNAct" id="P00015">
    <property type="molecule type" value="protein"/>
</dbReference>
<dbReference type="Bgee" id="ENSMUSG00000056436">
    <property type="expression patterns" value="Expressed in spermatocyte and 71 other cell types or tissues"/>
</dbReference>
<dbReference type="GO" id="GO:0005758">
    <property type="term" value="C:mitochondrial intermembrane space"/>
    <property type="evidence" value="ECO:0007669"/>
    <property type="project" value="UniProtKB-SubCell"/>
</dbReference>
<dbReference type="GO" id="GO:0005739">
    <property type="term" value="C:mitochondrion"/>
    <property type="evidence" value="ECO:0007005"/>
    <property type="project" value="MGI"/>
</dbReference>
<dbReference type="GO" id="GO:0009055">
    <property type="term" value="F:electron transfer activity"/>
    <property type="evidence" value="ECO:0007669"/>
    <property type="project" value="InterPro"/>
</dbReference>
<dbReference type="GO" id="GO:0020037">
    <property type="term" value="F:heme binding"/>
    <property type="evidence" value="ECO:0000314"/>
    <property type="project" value="MGI"/>
</dbReference>
<dbReference type="GO" id="GO:0046872">
    <property type="term" value="F:metal ion binding"/>
    <property type="evidence" value="ECO:0007669"/>
    <property type="project" value="UniProtKB-KW"/>
</dbReference>
<dbReference type="GO" id="GO:0006915">
    <property type="term" value="P:apoptotic process"/>
    <property type="evidence" value="ECO:0007669"/>
    <property type="project" value="UniProtKB-KW"/>
</dbReference>
<dbReference type="GO" id="GO:0042743">
    <property type="term" value="P:hydrogen peroxide metabolic process"/>
    <property type="evidence" value="ECO:0000314"/>
    <property type="project" value="MGI"/>
</dbReference>
<dbReference type="GO" id="GO:2001244">
    <property type="term" value="P:positive regulation of intrinsic apoptotic signaling pathway"/>
    <property type="evidence" value="ECO:0000314"/>
    <property type="project" value="MGI"/>
</dbReference>
<dbReference type="FunFam" id="1.10.760.10:FF:000008">
    <property type="entry name" value="Cytochrome c"/>
    <property type="match status" value="1"/>
</dbReference>
<dbReference type="Gene3D" id="1.10.760.10">
    <property type="entry name" value="Cytochrome c-like domain"/>
    <property type="match status" value="1"/>
</dbReference>
<dbReference type="InterPro" id="IPR009056">
    <property type="entry name" value="Cyt_c-like_dom"/>
</dbReference>
<dbReference type="InterPro" id="IPR036909">
    <property type="entry name" value="Cyt_c-like_dom_sf"/>
</dbReference>
<dbReference type="InterPro" id="IPR002327">
    <property type="entry name" value="Cyt_c_1A/1B"/>
</dbReference>
<dbReference type="PANTHER" id="PTHR11961">
    <property type="entry name" value="CYTOCHROME C"/>
    <property type="match status" value="1"/>
</dbReference>
<dbReference type="Pfam" id="PF00034">
    <property type="entry name" value="Cytochrom_C"/>
    <property type="match status" value="1"/>
</dbReference>
<dbReference type="PRINTS" id="PR00604">
    <property type="entry name" value="CYTCHRMECIAB"/>
</dbReference>
<dbReference type="SUPFAM" id="SSF46626">
    <property type="entry name" value="Cytochrome c"/>
    <property type="match status" value="1"/>
</dbReference>
<dbReference type="PROSITE" id="PS51007">
    <property type="entry name" value="CYTC"/>
    <property type="match status" value="1"/>
</dbReference>
<sequence>MGDAEAGKKIFVQKCAQCHTVEKGGKHKTGPNLWGLFGRKTGQAPGFSYTDANKNKGVIWSEETLMEYLENPKKYIPGTKMIFAGIKKKSEREDLIKYLKQATSS</sequence>
<reference key="1">
    <citation type="journal article" date="1988" name="J. Biol. Chem.">
        <title>Structure and expression of rodent genes encoding the testis-specific cytochrome c. Differences in gene structure and evolution between somatic and testicular variants.</title>
        <authorList>
            <person name="Virbasius J.V."/>
            <person name="Scarpulla R.C."/>
        </authorList>
    </citation>
    <scope>NUCLEOTIDE SEQUENCE [MRNA]</scope>
</reference>
<reference key="2">
    <citation type="journal article" date="2005" name="Science">
        <title>The transcriptional landscape of the mammalian genome.</title>
        <authorList>
            <person name="Carninci P."/>
            <person name="Kasukawa T."/>
            <person name="Katayama S."/>
            <person name="Gough J."/>
            <person name="Frith M.C."/>
            <person name="Maeda N."/>
            <person name="Oyama R."/>
            <person name="Ravasi T."/>
            <person name="Lenhard B."/>
            <person name="Wells C."/>
            <person name="Kodzius R."/>
            <person name="Shimokawa K."/>
            <person name="Bajic V.B."/>
            <person name="Brenner S.E."/>
            <person name="Batalov S."/>
            <person name="Forrest A.R."/>
            <person name="Zavolan M."/>
            <person name="Davis M.J."/>
            <person name="Wilming L.G."/>
            <person name="Aidinis V."/>
            <person name="Allen J.E."/>
            <person name="Ambesi-Impiombato A."/>
            <person name="Apweiler R."/>
            <person name="Aturaliya R.N."/>
            <person name="Bailey T.L."/>
            <person name="Bansal M."/>
            <person name="Baxter L."/>
            <person name="Beisel K.W."/>
            <person name="Bersano T."/>
            <person name="Bono H."/>
            <person name="Chalk A.M."/>
            <person name="Chiu K.P."/>
            <person name="Choudhary V."/>
            <person name="Christoffels A."/>
            <person name="Clutterbuck D.R."/>
            <person name="Crowe M.L."/>
            <person name="Dalla E."/>
            <person name="Dalrymple B.P."/>
            <person name="de Bono B."/>
            <person name="Della Gatta G."/>
            <person name="di Bernardo D."/>
            <person name="Down T."/>
            <person name="Engstrom P."/>
            <person name="Fagiolini M."/>
            <person name="Faulkner G."/>
            <person name="Fletcher C.F."/>
            <person name="Fukushima T."/>
            <person name="Furuno M."/>
            <person name="Futaki S."/>
            <person name="Gariboldi M."/>
            <person name="Georgii-Hemming P."/>
            <person name="Gingeras T.R."/>
            <person name="Gojobori T."/>
            <person name="Green R.E."/>
            <person name="Gustincich S."/>
            <person name="Harbers M."/>
            <person name="Hayashi Y."/>
            <person name="Hensch T.K."/>
            <person name="Hirokawa N."/>
            <person name="Hill D."/>
            <person name="Huminiecki L."/>
            <person name="Iacono M."/>
            <person name="Ikeo K."/>
            <person name="Iwama A."/>
            <person name="Ishikawa T."/>
            <person name="Jakt M."/>
            <person name="Kanapin A."/>
            <person name="Katoh M."/>
            <person name="Kawasawa Y."/>
            <person name="Kelso J."/>
            <person name="Kitamura H."/>
            <person name="Kitano H."/>
            <person name="Kollias G."/>
            <person name="Krishnan S.P."/>
            <person name="Kruger A."/>
            <person name="Kummerfeld S.K."/>
            <person name="Kurochkin I.V."/>
            <person name="Lareau L.F."/>
            <person name="Lazarevic D."/>
            <person name="Lipovich L."/>
            <person name="Liu J."/>
            <person name="Liuni S."/>
            <person name="McWilliam S."/>
            <person name="Madan Babu M."/>
            <person name="Madera M."/>
            <person name="Marchionni L."/>
            <person name="Matsuda H."/>
            <person name="Matsuzawa S."/>
            <person name="Miki H."/>
            <person name="Mignone F."/>
            <person name="Miyake S."/>
            <person name="Morris K."/>
            <person name="Mottagui-Tabar S."/>
            <person name="Mulder N."/>
            <person name="Nakano N."/>
            <person name="Nakauchi H."/>
            <person name="Ng P."/>
            <person name="Nilsson R."/>
            <person name="Nishiguchi S."/>
            <person name="Nishikawa S."/>
            <person name="Nori F."/>
            <person name="Ohara O."/>
            <person name="Okazaki Y."/>
            <person name="Orlando V."/>
            <person name="Pang K.C."/>
            <person name="Pavan W.J."/>
            <person name="Pavesi G."/>
            <person name="Pesole G."/>
            <person name="Petrovsky N."/>
            <person name="Piazza S."/>
            <person name="Reed J."/>
            <person name="Reid J.F."/>
            <person name="Ring B.Z."/>
            <person name="Ringwald M."/>
            <person name="Rost B."/>
            <person name="Ruan Y."/>
            <person name="Salzberg S.L."/>
            <person name="Sandelin A."/>
            <person name="Schneider C."/>
            <person name="Schoenbach C."/>
            <person name="Sekiguchi K."/>
            <person name="Semple C.A."/>
            <person name="Seno S."/>
            <person name="Sessa L."/>
            <person name="Sheng Y."/>
            <person name="Shibata Y."/>
            <person name="Shimada H."/>
            <person name="Shimada K."/>
            <person name="Silva D."/>
            <person name="Sinclair B."/>
            <person name="Sperling S."/>
            <person name="Stupka E."/>
            <person name="Sugiura K."/>
            <person name="Sultana R."/>
            <person name="Takenaka Y."/>
            <person name="Taki K."/>
            <person name="Tammoja K."/>
            <person name="Tan S.L."/>
            <person name="Tang S."/>
            <person name="Taylor M.S."/>
            <person name="Tegner J."/>
            <person name="Teichmann S.A."/>
            <person name="Ueda H.R."/>
            <person name="van Nimwegen E."/>
            <person name="Verardo R."/>
            <person name="Wei C.L."/>
            <person name="Yagi K."/>
            <person name="Yamanishi H."/>
            <person name="Zabarovsky E."/>
            <person name="Zhu S."/>
            <person name="Zimmer A."/>
            <person name="Hide W."/>
            <person name="Bult C."/>
            <person name="Grimmond S.M."/>
            <person name="Teasdale R.D."/>
            <person name="Liu E.T."/>
            <person name="Brusic V."/>
            <person name="Quackenbush J."/>
            <person name="Wahlestedt C."/>
            <person name="Mattick J.S."/>
            <person name="Hume D.A."/>
            <person name="Kai C."/>
            <person name="Sasaki D."/>
            <person name="Tomaru Y."/>
            <person name="Fukuda S."/>
            <person name="Kanamori-Katayama M."/>
            <person name="Suzuki M."/>
            <person name="Aoki J."/>
            <person name="Arakawa T."/>
            <person name="Iida J."/>
            <person name="Imamura K."/>
            <person name="Itoh M."/>
            <person name="Kato T."/>
            <person name="Kawaji H."/>
            <person name="Kawagashira N."/>
            <person name="Kawashima T."/>
            <person name="Kojima M."/>
            <person name="Kondo S."/>
            <person name="Konno H."/>
            <person name="Nakano K."/>
            <person name="Ninomiya N."/>
            <person name="Nishio T."/>
            <person name="Okada M."/>
            <person name="Plessy C."/>
            <person name="Shibata K."/>
            <person name="Shiraki T."/>
            <person name="Suzuki S."/>
            <person name="Tagami M."/>
            <person name="Waki K."/>
            <person name="Watahiki A."/>
            <person name="Okamura-Oho Y."/>
            <person name="Suzuki H."/>
            <person name="Kawai J."/>
            <person name="Hayashizaki Y."/>
        </authorList>
    </citation>
    <scope>NUCLEOTIDE SEQUENCE [LARGE SCALE MRNA]</scope>
    <source>
        <strain>C57BL/6J</strain>
        <tissue>Testis</tissue>
    </source>
</reference>
<reference key="3">
    <citation type="journal article" date="1975" name="Eur. J. Biochem.">
        <title>Change of cytochrome c structure during development of the mouse.</title>
        <authorList>
            <person name="Hennig B."/>
        </authorList>
    </citation>
    <scope>PRELIMINARY PROTEIN SEQUENCE OF 2-105</scope>
    <scope>CLEAVAGE OF INITIATOR METHIONINE</scope>
    <scope>ACETYLATION AT GLY-2</scope>
    <source>
        <strain>BALB/cJ</strain>
    </source>
</reference>
<reference key="4">
    <citation type="journal article" date="2010" name="Cell">
        <title>A tissue-specific atlas of mouse protein phosphorylation and expression.</title>
        <authorList>
            <person name="Huttlin E.L."/>
            <person name="Jedrychowski M.P."/>
            <person name="Elias J.E."/>
            <person name="Goswami T."/>
            <person name="Rad R."/>
            <person name="Beausoleil S.A."/>
            <person name="Villen J."/>
            <person name="Haas W."/>
            <person name="Sowa M.E."/>
            <person name="Gygi S.P."/>
        </authorList>
    </citation>
    <scope>IDENTIFICATION BY MASS SPECTROMETRY [LARGE SCALE ANALYSIS]</scope>
    <source>
        <tissue>Brain</tissue>
        <tissue>Heart</tissue>
        <tissue>Testis</tissue>
    </source>
</reference>
<protein>
    <recommendedName>
        <fullName>Cytochrome c, testis-specific</fullName>
    </recommendedName>
</protein>
<gene>
    <name type="primary">Cyct</name>
</gene>
<accession>P00015</accession>
<comment type="function">
    <text>Electron carrier protein. The oxidized form of the cytochrome c heme group can accept an electron from the heme group of the cytochrome c1 subunit of cytochrome reductase. Cytochrome c then transfers this electron to the cytochrome oxidase complex, the final protein carrier in the mitochondrial electron-transport chain.</text>
</comment>
<comment type="function">
    <text evidence="1">Plays a role in apoptosis. Suppression of the anti-apoptotic members or activation of the pro-apoptotic members of the Bcl-2 family leads to altered mitochondrial membrane permeability resulting in release of cytochrome c into the cytosol. Binding of cytochrome c to Apaf-1 triggers the activation of caspase-9, which then accelerates apoptosis by activating other caspases (By similarity).</text>
</comment>
<comment type="subcellular location">
    <subcellularLocation>
        <location>Mitochondrion intermembrane space</location>
    </subcellularLocation>
    <text>Loosely associated with the inner membrane.</text>
</comment>
<comment type="tissue specificity">
    <text>This is one of two isocytochromes C found in the testis. The other is identical with the form found in other mouse tissues. These cytochromes are assumed to be located in the sperm.</text>
</comment>
<comment type="PTM">
    <text>Binds 1 heme c group covalently per subunit.</text>
</comment>
<comment type="PTM">
    <text evidence="1">Phosphorylation at Tyr-49 and Tyr-98 both reduce by half the turnover in the reaction with cytochrome c oxidase, down-regulating mitochondrial respiration.</text>
</comment>
<comment type="similarity">
    <text evidence="4">Belongs to the cytochrome c family.</text>
</comment>
<comment type="online information" name="Protein Spotlight">
    <link uri="https://www.proteinspotlight.org/back_issues/076"/>
    <text>Life shuttle - Issue 76 of November 2006</text>
</comment>